<keyword id="KW-0167">Capsid protein</keyword>
<keyword id="KW-1139">Helical capsid protein</keyword>
<keyword id="KW-1048">Host nucleus</keyword>
<keyword id="KW-0945">Host-virus interaction</keyword>
<keyword id="KW-0687">Ribonucleoprotein</keyword>
<keyword id="KW-0694">RNA-binding</keyword>
<keyword id="KW-0543">Viral nucleoprotein</keyword>
<keyword id="KW-1163">Viral penetration into host nucleus</keyword>
<keyword id="KW-0946">Virion</keyword>
<keyword id="KW-1160">Virus entry into host cell</keyword>
<comment type="function">
    <text evidence="1">Encapsidates the negative strand viral RNA, protecting it from nucleases. The encapsidated genomic RNA is termed the ribonucleoprotein (RNP) and serves as template for transcription and replication. The RNP needs to be localized in the host nucleus to start an infectious cycle, but is too large to diffuse through the nuclear pore complex. NP comprises at least 2 nuclear localization signals that are responsible for the active RNP import into the nucleus through cellular importin alpha/beta pathway. Later in the infection, nclear export of RNPs are mediated through viral proteins NEP interacting with M1 which binds nucleoproteins. It is possible that nucleoprotein binds directly host exportin-1/XPO1 and plays an active role in RNPs nuclear export. M1 interaction with RNP seems to hide nucleoprotein's nuclear localization signals. Soon after a virion infects a new cell, M1 dissociates from the RNP under acidification of the virion driven by M2 protein. Dissociation of M1 from RNP unmasks nucleoprotein's nuclear localization signals, targeting the RNP to the nucleus.</text>
</comment>
<comment type="subunit">
    <text evidence="1">Homomultimerizes to form the nucleocapsid. May bind host exportin-1/XPO1. Binds to viral genomic RNA. Protein-RNA contacts are mediated by a combination of electrostatic interactions between positively charged residues and the phosphate backbone and planar interactions between aromatic side chains and bases.</text>
</comment>
<comment type="subcellular location">
    <subcellularLocation>
        <location evidence="1">Virion</location>
    </subcellularLocation>
    <subcellularLocation>
        <location evidence="1">Host nucleus</location>
    </subcellularLocation>
</comment>
<comment type="PTM">
    <text evidence="1">Late in virus-infected cells, may be cleaved from a 56-kDa protein to a 53-kDa protein by a cellular caspase. This cleavage might be a marker for the onset of apoptosis in infected cells or have a specific function in virus host interaction.</text>
</comment>
<comment type="similarity">
    <text evidence="1">Belongs to the influenza viruses nucleoprotein family.</text>
</comment>
<gene>
    <name evidence="1" type="primary">NP</name>
</gene>
<organism>
    <name type="scientific">Influenza A virus (strain A/Anas acuta/Primorje/695/1976 H2N3)</name>
    <dbReference type="NCBI Taxonomy" id="383602"/>
    <lineage>
        <taxon>Viruses</taxon>
        <taxon>Riboviria</taxon>
        <taxon>Orthornavirae</taxon>
        <taxon>Negarnaviricota</taxon>
        <taxon>Polyploviricotina</taxon>
        <taxon>Insthoviricetes</taxon>
        <taxon>Articulavirales</taxon>
        <taxon>Orthomyxoviridae</taxon>
        <taxon>Alphainfluenzavirus</taxon>
        <taxon>Alphainfluenzavirus influenzae</taxon>
        <taxon>Influenza A virus</taxon>
    </lineage>
</organism>
<feature type="chain" id="PRO_0000079020" description="Nucleoprotein">
    <location>
        <begin position="1"/>
        <end position="498"/>
    </location>
</feature>
<feature type="region of interest" description="Disordered" evidence="2">
    <location>
        <begin position="1"/>
        <end position="21"/>
    </location>
</feature>
<feature type="short sequence motif" description="Unconventional nuclear localization signal" evidence="1">
    <location>
        <begin position="1"/>
        <end position="18"/>
    </location>
</feature>
<feature type="short sequence motif" description="Bipartite nuclear localization signal" evidence="1">
    <location>
        <begin position="198"/>
        <end position="216"/>
    </location>
</feature>
<protein>
    <recommendedName>
        <fullName evidence="1">Nucleoprotein</fullName>
    </recommendedName>
    <alternativeName>
        <fullName evidence="1">Nucleocapsid protein</fullName>
        <shortName evidence="1">Protein N</shortName>
    </alternativeName>
</protein>
<accession>P18277</accession>
<reference key="1">
    <citation type="journal article" date="1991" name="Nucleic Acids Res.">
        <title>Sequence of the nucleoprotein (NP) gene of the influenza Alanas acuta/Primorje/695/76 (H2N3) virus.</title>
        <authorList>
            <person name="Mandler J."/>
            <person name="Kunerl M.S."/>
            <person name="Ludwig S."/>
            <person name="Herget M.E."/>
            <person name="Scholtissek C."/>
        </authorList>
    </citation>
    <scope>NUCLEOTIDE SEQUENCE [GENOMIC RNA]</scope>
</reference>
<evidence type="ECO:0000255" key="1">
    <source>
        <dbReference type="HAMAP-Rule" id="MF_04070"/>
    </source>
</evidence>
<evidence type="ECO:0000256" key="2">
    <source>
        <dbReference type="SAM" id="MobiDB-lite"/>
    </source>
</evidence>
<name>NCAP_I76A0</name>
<sequence length="498" mass="56349">MASQGTKRSYEQMETGGERQNATEIRASVGRMVGGIGRFYIQMCTELKLSDYEGRLIQNSITIERMVLSAFDERRNKYLEEHPSAGKDPKKTGGPIYRRRDGKWIRELILYDKEEIRRIWRQANNGEDATAGLTHLMIWHSNLNDATYQRTRALVRTGMDPRMCSLMQGSTLPRRSGAAGAAVKGVGTMVMELIRMIKRGINDRNFWRGENGRRTRIAYERMCNILKGKFQTAAQRAMMDQVRESRNPGNAEIEDLIFLARSALILRGSVAHKSCLPACVYGLAVASGYDFEREGYSLVGIDPFRLLQNSQVFSLIRPNENPAHKSQLVWMACHSAAFEDLRVSSFIRGTRVVPRGQLSTRGVQIASNENMETMDSRTLELRSRYWAIRTRSGGNTNQQRASAGQISVQPTFSVQRKLPFERATIMAAFTGNTEGRTSDMRTEIIRMMESARPEDVSFQGRGVFELSDEKATNPIVPSFDMSNEGSYFFGDNAEEYDN</sequence>
<organismHost>
    <name type="scientific">Aves</name>
    <dbReference type="NCBI Taxonomy" id="8782"/>
</organismHost>
<proteinExistence type="inferred from homology"/>
<dbReference type="EMBL" id="M36812">
    <property type="protein sequence ID" value="AAA43129.1"/>
    <property type="molecule type" value="Genomic_RNA"/>
</dbReference>
<dbReference type="PIR" id="S34418">
    <property type="entry name" value="S34418"/>
</dbReference>
<dbReference type="SMR" id="P18277"/>
<dbReference type="GO" id="GO:0019029">
    <property type="term" value="C:helical viral capsid"/>
    <property type="evidence" value="ECO:0007669"/>
    <property type="project" value="UniProtKB-UniRule"/>
</dbReference>
<dbReference type="GO" id="GO:0043657">
    <property type="term" value="C:host cell"/>
    <property type="evidence" value="ECO:0007669"/>
    <property type="project" value="GOC"/>
</dbReference>
<dbReference type="GO" id="GO:0042025">
    <property type="term" value="C:host cell nucleus"/>
    <property type="evidence" value="ECO:0007669"/>
    <property type="project" value="UniProtKB-SubCell"/>
</dbReference>
<dbReference type="GO" id="GO:1990904">
    <property type="term" value="C:ribonucleoprotein complex"/>
    <property type="evidence" value="ECO:0007669"/>
    <property type="project" value="UniProtKB-KW"/>
</dbReference>
<dbReference type="GO" id="GO:0019013">
    <property type="term" value="C:viral nucleocapsid"/>
    <property type="evidence" value="ECO:0007669"/>
    <property type="project" value="UniProtKB-UniRule"/>
</dbReference>
<dbReference type="GO" id="GO:0003723">
    <property type="term" value="F:RNA binding"/>
    <property type="evidence" value="ECO:0007669"/>
    <property type="project" value="UniProtKB-UniRule"/>
</dbReference>
<dbReference type="GO" id="GO:0005198">
    <property type="term" value="F:structural molecule activity"/>
    <property type="evidence" value="ECO:0007669"/>
    <property type="project" value="UniProtKB-UniRule"/>
</dbReference>
<dbReference type="GO" id="GO:0046718">
    <property type="term" value="P:symbiont entry into host cell"/>
    <property type="evidence" value="ECO:0007669"/>
    <property type="project" value="UniProtKB-KW"/>
</dbReference>
<dbReference type="GO" id="GO:0075732">
    <property type="term" value="P:viral penetration into host nucleus"/>
    <property type="evidence" value="ECO:0007669"/>
    <property type="project" value="UniProtKB-UniRule"/>
</dbReference>
<dbReference type="HAMAP" id="MF_04070">
    <property type="entry name" value="INFV_NCAP"/>
    <property type="match status" value="1"/>
</dbReference>
<dbReference type="InterPro" id="IPR002141">
    <property type="entry name" value="Flu_NP"/>
</dbReference>
<dbReference type="Pfam" id="PF00506">
    <property type="entry name" value="Flu_NP"/>
    <property type="match status" value="1"/>
</dbReference>
<dbReference type="SUPFAM" id="SSF161003">
    <property type="entry name" value="flu NP-like"/>
    <property type="match status" value="1"/>
</dbReference>